<protein>
    <recommendedName>
        <fullName>Netrin-B</fullName>
    </recommendedName>
</protein>
<keyword id="KW-0963">Cytoplasm</keyword>
<keyword id="KW-1015">Disulfide bond</keyword>
<keyword id="KW-0272">Extracellular matrix</keyword>
<keyword id="KW-0325">Glycoprotein</keyword>
<keyword id="KW-0424">Laminin EGF-like domain</keyword>
<keyword id="KW-1185">Reference proteome</keyword>
<keyword id="KW-0677">Repeat</keyword>
<keyword id="KW-0964">Secreted</keyword>
<keyword id="KW-0732">Signal</keyword>
<comment type="function">
    <text evidence="6 8 9">Netrins control guidance of CNS commissural axons and peripheral motor axons (PubMed:11719202, PubMed:8780645, PubMed:8780646). Its association with either fra or unc-5 receptors will lead to axon attraction or repulsion, respectively (PubMed:11719202). While short-range repulsion requires both fra and unc-5 receptors, long-range repulsion only requires unc-5 (PubMed:11719202).</text>
</comment>
<comment type="subunit">
    <text evidence="6">Binds to unc-5 and fra receptors.</text>
</comment>
<comment type="interaction">
    <interactant intactId="EBI-3406532">
        <id>Q24568</id>
    </interactant>
    <interactant intactId="EBI-6895101">
        <id>Q94538</id>
        <label>fra</label>
    </interactant>
    <organismsDiffer>false</organismsDiffer>
    <experiments>2</experiments>
</comment>
<comment type="subcellular location">
    <subcellularLocation>
        <location evidence="10">Secreted</location>
        <location evidence="10">Extracellular space</location>
        <location evidence="10">Extracellular matrix</location>
    </subcellularLocation>
    <subcellularLocation>
        <location evidence="7">Cytoplasm</location>
        <location evidence="7">Perinuclear region</location>
    </subcellularLocation>
    <text evidence="7">Expressed in the perinuclear region of the oldest most anterior lamina neurons at 24 hours after puparium formation.</text>
</comment>
<comment type="tissue specificity">
    <text evidence="7 8 9">At 24 hr after puparium formation (APF), detected in the most anterior (oldest) L3, L4 and L5 lamina neurons (at protein level) (PubMed:29513217). At 48 hr APF, expressed in all L3, L4 and L5 neurons with slightly higher expression in the L3 neurons (at protein level) (PubMed:29513217). At the midline of developing CNS and in different subsets of neurons, muscles, and epidermal patches (PubMed:8780645, PubMed:8780646).</text>
</comment>
<comment type="caution">
    <text evidence="10">It is uncertain whether Met-1 or Met-9 is the initiator.</text>
</comment>
<reference key="1">
    <citation type="journal article" date="1996" name="Neuron">
        <title>Genetic analysis of netrin genes in Drosophila: netrins guide CNS commissural axons and peripheral motor axons.</title>
        <authorList>
            <person name="Mitchell K.J."/>
            <person name="Doyle J.L."/>
            <person name="Serafini T."/>
            <person name="Kennedy T."/>
            <person name="Tessier-Lavigne M."/>
            <person name="Goodman C.S."/>
            <person name="Dickson B.J."/>
        </authorList>
    </citation>
    <scope>NUCLEOTIDE SEQUENCE [MRNA]</scope>
    <source>
        <tissue>Embryo</tissue>
    </source>
</reference>
<reference key="2">
    <citation type="journal article" date="1996" name="Neuron">
        <title>Guidance cues at the Drosophila CNS midline: identification and characterization of two Drosophila Netrin/UNC-6 homologs.</title>
        <authorList>
            <person name="Harris R."/>
            <person name="Moore-Sabatelli L."/>
            <person name="Seeger M."/>
        </authorList>
    </citation>
    <scope>NUCLEOTIDE SEQUENCE [MRNA]</scope>
    <source>
        <tissue>Embryo</tissue>
    </source>
</reference>
<reference key="3">
    <citation type="journal article" date="2000" name="Science">
        <title>The genome sequence of Drosophila melanogaster.</title>
        <authorList>
            <person name="Adams M.D."/>
            <person name="Celniker S.E."/>
            <person name="Holt R.A."/>
            <person name="Evans C.A."/>
            <person name="Gocayne J.D."/>
            <person name="Amanatides P.G."/>
            <person name="Scherer S.E."/>
            <person name="Li P.W."/>
            <person name="Hoskins R.A."/>
            <person name="Galle R.F."/>
            <person name="George R.A."/>
            <person name="Lewis S.E."/>
            <person name="Richards S."/>
            <person name="Ashburner M."/>
            <person name="Henderson S.N."/>
            <person name="Sutton G.G."/>
            <person name="Wortman J.R."/>
            <person name="Yandell M.D."/>
            <person name="Zhang Q."/>
            <person name="Chen L.X."/>
            <person name="Brandon R.C."/>
            <person name="Rogers Y.-H.C."/>
            <person name="Blazej R.G."/>
            <person name="Champe M."/>
            <person name="Pfeiffer B.D."/>
            <person name="Wan K.H."/>
            <person name="Doyle C."/>
            <person name="Baxter E.G."/>
            <person name="Helt G."/>
            <person name="Nelson C.R."/>
            <person name="Miklos G.L.G."/>
            <person name="Abril J.F."/>
            <person name="Agbayani A."/>
            <person name="An H.-J."/>
            <person name="Andrews-Pfannkoch C."/>
            <person name="Baldwin D."/>
            <person name="Ballew R.M."/>
            <person name="Basu A."/>
            <person name="Baxendale J."/>
            <person name="Bayraktaroglu L."/>
            <person name="Beasley E.M."/>
            <person name="Beeson K.Y."/>
            <person name="Benos P.V."/>
            <person name="Berman B.P."/>
            <person name="Bhandari D."/>
            <person name="Bolshakov S."/>
            <person name="Borkova D."/>
            <person name="Botchan M.R."/>
            <person name="Bouck J."/>
            <person name="Brokstein P."/>
            <person name="Brottier P."/>
            <person name="Burtis K.C."/>
            <person name="Busam D.A."/>
            <person name="Butler H."/>
            <person name="Cadieu E."/>
            <person name="Center A."/>
            <person name="Chandra I."/>
            <person name="Cherry J.M."/>
            <person name="Cawley S."/>
            <person name="Dahlke C."/>
            <person name="Davenport L.B."/>
            <person name="Davies P."/>
            <person name="de Pablos B."/>
            <person name="Delcher A."/>
            <person name="Deng Z."/>
            <person name="Mays A.D."/>
            <person name="Dew I."/>
            <person name="Dietz S.M."/>
            <person name="Dodson K."/>
            <person name="Doup L.E."/>
            <person name="Downes M."/>
            <person name="Dugan-Rocha S."/>
            <person name="Dunkov B.C."/>
            <person name="Dunn P."/>
            <person name="Durbin K.J."/>
            <person name="Evangelista C.C."/>
            <person name="Ferraz C."/>
            <person name="Ferriera S."/>
            <person name="Fleischmann W."/>
            <person name="Fosler C."/>
            <person name="Gabrielian A.E."/>
            <person name="Garg N.S."/>
            <person name="Gelbart W.M."/>
            <person name="Glasser K."/>
            <person name="Glodek A."/>
            <person name="Gong F."/>
            <person name="Gorrell J.H."/>
            <person name="Gu Z."/>
            <person name="Guan P."/>
            <person name="Harris M."/>
            <person name="Harris N.L."/>
            <person name="Harvey D.A."/>
            <person name="Heiman T.J."/>
            <person name="Hernandez J.R."/>
            <person name="Houck J."/>
            <person name="Hostin D."/>
            <person name="Houston K.A."/>
            <person name="Howland T.J."/>
            <person name="Wei M.-H."/>
            <person name="Ibegwam C."/>
            <person name="Jalali M."/>
            <person name="Kalush F."/>
            <person name="Karpen G.H."/>
            <person name="Ke Z."/>
            <person name="Kennison J.A."/>
            <person name="Ketchum K.A."/>
            <person name="Kimmel B.E."/>
            <person name="Kodira C.D."/>
            <person name="Kraft C.L."/>
            <person name="Kravitz S."/>
            <person name="Kulp D."/>
            <person name="Lai Z."/>
            <person name="Lasko P."/>
            <person name="Lei Y."/>
            <person name="Levitsky A.A."/>
            <person name="Li J.H."/>
            <person name="Li Z."/>
            <person name="Liang Y."/>
            <person name="Lin X."/>
            <person name="Liu X."/>
            <person name="Mattei B."/>
            <person name="McIntosh T.C."/>
            <person name="McLeod M.P."/>
            <person name="McPherson D."/>
            <person name="Merkulov G."/>
            <person name="Milshina N.V."/>
            <person name="Mobarry C."/>
            <person name="Morris J."/>
            <person name="Moshrefi A."/>
            <person name="Mount S.M."/>
            <person name="Moy M."/>
            <person name="Murphy B."/>
            <person name="Murphy L."/>
            <person name="Muzny D.M."/>
            <person name="Nelson D.L."/>
            <person name="Nelson D.R."/>
            <person name="Nelson K.A."/>
            <person name="Nixon K."/>
            <person name="Nusskern D.R."/>
            <person name="Pacleb J.M."/>
            <person name="Palazzolo M."/>
            <person name="Pittman G.S."/>
            <person name="Pan S."/>
            <person name="Pollard J."/>
            <person name="Puri V."/>
            <person name="Reese M.G."/>
            <person name="Reinert K."/>
            <person name="Remington K."/>
            <person name="Saunders R.D.C."/>
            <person name="Scheeler F."/>
            <person name="Shen H."/>
            <person name="Shue B.C."/>
            <person name="Siden-Kiamos I."/>
            <person name="Simpson M."/>
            <person name="Skupski M.P."/>
            <person name="Smith T.J."/>
            <person name="Spier E."/>
            <person name="Spradling A.C."/>
            <person name="Stapleton M."/>
            <person name="Strong R."/>
            <person name="Sun E."/>
            <person name="Svirskas R."/>
            <person name="Tector C."/>
            <person name="Turner R."/>
            <person name="Venter E."/>
            <person name="Wang A.H."/>
            <person name="Wang X."/>
            <person name="Wang Z.-Y."/>
            <person name="Wassarman D.A."/>
            <person name="Weinstock G.M."/>
            <person name="Weissenbach J."/>
            <person name="Williams S.M."/>
            <person name="Woodage T."/>
            <person name="Worley K.C."/>
            <person name="Wu D."/>
            <person name="Yang S."/>
            <person name="Yao Q.A."/>
            <person name="Ye J."/>
            <person name="Yeh R.-F."/>
            <person name="Zaveri J.S."/>
            <person name="Zhan M."/>
            <person name="Zhang G."/>
            <person name="Zhao Q."/>
            <person name="Zheng L."/>
            <person name="Zheng X.H."/>
            <person name="Zhong F.N."/>
            <person name="Zhong W."/>
            <person name="Zhou X."/>
            <person name="Zhu S.C."/>
            <person name="Zhu X."/>
            <person name="Smith H.O."/>
            <person name="Gibbs R.A."/>
            <person name="Myers E.W."/>
            <person name="Rubin G.M."/>
            <person name="Venter J.C."/>
        </authorList>
    </citation>
    <scope>NUCLEOTIDE SEQUENCE [LARGE SCALE GENOMIC DNA]</scope>
    <source>
        <strain>Berkeley</strain>
    </source>
</reference>
<reference key="4">
    <citation type="journal article" date="2002" name="Genome Biol.">
        <title>Annotation of the Drosophila melanogaster euchromatic genome: a systematic review.</title>
        <authorList>
            <person name="Misra S."/>
            <person name="Crosby M.A."/>
            <person name="Mungall C.J."/>
            <person name="Matthews B.B."/>
            <person name="Campbell K.S."/>
            <person name="Hradecky P."/>
            <person name="Huang Y."/>
            <person name="Kaminker J.S."/>
            <person name="Millburn G.H."/>
            <person name="Prochnik S.E."/>
            <person name="Smith C.D."/>
            <person name="Tupy J.L."/>
            <person name="Whitfield E.J."/>
            <person name="Bayraktaroglu L."/>
            <person name="Berman B.P."/>
            <person name="Bettencourt B.R."/>
            <person name="Celniker S.E."/>
            <person name="de Grey A.D.N.J."/>
            <person name="Drysdale R.A."/>
            <person name="Harris N.L."/>
            <person name="Richter J."/>
            <person name="Russo S."/>
            <person name="Schroeder A.J."/>
            <person name="Shu S.Q."/>
            <person name="Stapleton M."/>
            <person name="Yamada C."/>
            <person name="Ashburner M."/>
            <person name="Gelbart W.M."/>
            <person name="Rubin G.M."/>
            <person name="Lewis S.E."/>
        </authorList>
    </citation>
    <scope>GENOME REANNOTATION</scope>
    <source>
        <strain>Berkeley</strain>
    </source>
</reference>
<reference key="5">
    <citation type="journal article" date="2001" name="Neuron">
        <title>Short- and long-range repulsion by the Drosophila Unc5 netrin receptor.</title>
        <authorList>
            <person name="Keleman K."/>
            <person name="Dickson B.J."/>
        </authorList>
    </citation>
    <scope>INTERACTION WITH FRA AND UNC-5</scope>
</reference>
<reference key="6">
    <citation type="journal article" date="2018" name="Elife">
        <title>Fezf coordinates laminar-specific connectivity through cell-intrinsic and cell-extrinsic mechanisms.</title>
        <authorList>
            <person name="Peng J."/>
            <person name="Santiago I.J."/>
            <person name="Ahn C."/>
            <person name="Gur B."/>
            <person name="Tsui C.K."/>
            <person name="Su Z."/>
            <person name="Xu C."/>
            <person name="Karakhanyan A."/>
            <person name="Silies M."/>
            <person name="Pecot M.Y."/>
        </authorList>
    </citation>
    <scope>SUBCELLULAR LOCATION</scope>
    <scope>TISSUE SPECIFICITY</scope>
</reference>
<proteinExistence type="evidence at protein level"/>
<evidence type="ECO:0000255" key="1"/>
<evidence type="ECO:0000255" key="2">
    <source>
        <dbReference type="PROSITE-ProRule" id="PRU00295"/>
    </source>
</evidence>
<evidence type="ECO:0000255" key="3">
    <source>
        <dbReference type="PROSITE-ProRule" id="PRU00460"/>
    </source>
</evidence>
<evidence type="ECO:0000255" key="4">
    <source>
        <dbReference type="PROSITE-ProRule" id="PRU00466"/>
    </source>
</evidence>
<evidence type="ECO:0000256" key="5">
    <source>
        <dbReference type="SAM" id="MobiDB-lite"/>
    </source>
</evidence>
<evidence type="ECO:0000269" key="6">
    <source>
    </source>
</evidence>
<evidence type="ECO:0000269" key="7">
    <source>
    </source>
</evidence>
<evidence type="ECO:0000269" key="8">
    <source>
    </source>
</evidence>
<evidence type="ECO:0000269" key="9">
    <source>
    </source>
</evidence>
<evidence type="ECO:0000305" key="10"/>
<organism>
    <name type="scientific">Drosophila melanogaster</name>
    <name type="common">Fruit fly</name>
    <dbReference type="NCBI Taxonomy" id="7227"/>
    <lineage>
        <taxon>Eukaryota</taxon>
        <taxon>Metazoa</taxon>
        <taxon>Ecdysozoa</taxon>
        <taxon>Arthropoda</taxon>
        <taxon>Hexapoda</taxon>
        <taxon>Insecta</taxon>
        <taxon>Pterygota</taxon>
        <taxon>Neoptera</taxon>
        <taxon>Endopterygota</taxon>
        <taxon>Diptera</taxon>
        <taxon>Brachycera</taxon>
        <taxon>Muscomorpha</taxon>
        <taxon>Ephydroidea</taxon>
        <taxon>Drosophilidae</taxon>
        <taxon>Drosophila</taxon>
        <taxon>Sophophora</taxon>
    </lineage>
</organism>
<feature type="signal peptide" evidence="1">
    <location>
        <begin position="1"/>
        <end position="22"/>
    </location>
</feature>
<feature type="chain" id="PRO_0000017089" description="Netrin-B">
    <location>
        <begin position="23"/>
        <end position="793"/>
    </location>
</feature>
<feature type="domain" description="Laminin N-terminal" evidence="4">
    <location>
        <begin position="39"/>
        <end position="303"/>
    </location>
</feature>
<feature type="domain" description="Laminin EGF-like 1" evidence="3">
    <location>
        <begin position="405"/>
        <end position="497"/>
    </location>
</feature>
<feature type="domain" description="Laminin EGF-like 2" evidence="3">
    <location>
        <begin position="498"/>
        <end position="560"/>
    </location>
</feature>
<feature type="domain" description="Laminin EGF-like 3" evidence="3">
    <location>
        <begin position="561"/>
        <end position="610"/>
    </location>
</feature>
<feature type="domain" description="NTR" evidence="2">
    <location>
        <begin position="649"/>
        <end position="792"/>
    </location>
</feature>
<feature type="region of interest" description="Disordered" evidence="5">
    <location>
        <begin position="332"/>
        <end position="378"/>
    </location>
</feature>
<feature type="region of interest" description="Disordered" evidence="5">
    <location>
        <begin position="420"/>
        <end position="446"/>
    </location>
</feature>
<feature type="compositionally biased region" description="Low complexity" evidence="5">
    <location>
        <begin position="367"/>
        <end position="378"/>
    </location>
</feature>
<feature type="compositionally biased region" description="Acidic residues" evidence="5">
    <location>
        <begin position="428"/>
        <end position="437"/>
    </location>
</feature>
<feature type="glycosylation site" description="N-linked (GlcNAc...) asparagine" evidence="1">
    <location>
        <position position="103"/>
    </location>
</feature>
<feature type="glycosylation site" description="N-linked (GlcNAc...) asparagine" evidence="1">
    <location>
        <position position="125"/>
    </location>
</feature>
<feature type="glycosylation site" description="N-linked (GlcNAc...) asparagine" evidence="1">
    <location>
        <position position="298"/>
    </location>
</feature>
<feature type="glycosylation site" description="N-linked (GlcNAc...) asparagine" evidence="1">
    <location>
        <position position="746"/>
    </location>
</feature>
<feature type="disulfide bond" evidence="3">
    <location>
        <begin position="405"/>
        <end position="414"/>
    </location>
</feature>
<feature type="disulfide bond" evidence="3">
    <location>
        <begin position="407"/>
        <end position="461"/>
    </location>
</feature>
<feature type="disulfide bond" evidence="3">
    <location>
        <begin position="463"/>
        <end position="472"/>
    </location>
</feature>
<feature type="disulfide bond" evidence="3">
    <location>
        <begin position="475"/>
        <end position="495"/>
    </location>
</feature>
<feature type="disulfide bond" evidence="3">
    <location>
        <begin position="498"/>
        <end position="507"/>
    </location>
</feature>
<feature type="disulfide bond" evidence="3">
    <location>
        <begin position="500"/>
        <end position="525"/>
    </location>
</feature>
<feature type="disulfide bond" evidence="3">
    <location>
        <begin position="528"/>
        <end position="537"/>
    </location>
</feature>
<feature type="disulfide bond" evidence="3">
    <location>
        <begin position="540"/>
        <end position="558"/>
    </location>
</feature>
<feature type="disulfide bond" evidence="3">
    <location>
        <begin position="561"/>
        <end position="573"/>
    </location>
</feature>
<feature type="disulfide bond" evidence="3">
    <location>
        <begin position="563"/>
        <end position="580"/>
    </location>
</feature>
<feature type="disulfide bond" evidence="3">
    <location>
        <begin position="582"/>
        <end position="591"/>
    </location>
</feature>
<feature type="disulfide bond" evidence="3">
    <location>
        <begin position="594"/>
        <end position="608"/>
    </location>
</feature>
<feature type="disulfide bond" evidence="2">
    <location>
        <begin position="649"/>
        <end position="738"/>
    </location>
</feature>
<feature type="disulfide bond" evidence="2">
    <location>
        <begin position="652"/>
        <end position="740"/>
    </location>
</feature>
<feature type="disulfide bond" evidence="2">
    <location>
        <begin position="665"/>
        <end position="792"/>
    </location>
</feature>
<dbReference type="EMBL" id="U60317">
    <property type="protein sequence ID" value="AAB17534.1"/>
    <property type="molecule type" value="mRNA"/>
</dbReference>
<dbReference type="EMBL" id="U63737">
    <property type="protein sequence ID" value="AAB17548.1"/>
    <property type="molecule type" value="mRNA"/>
</dbReference>
<dbReference type="EMBL" id="AE014298">
    <property type="protein sequence ID" value="AAF48382.1"/>
    <property type="molecule type" value="Genomic_DNA"/>
</dbReference>
<dbReference type="RefSeq" id="NP_001162753.1">
    <property type="nucleotide sequence ID" value="NM_001169282.1"/>
</dbReference>
<dbReference type="RefSeq" id="NP_001162754.1">
    <property type="nucleotide sequence ID" value="NM_001169283.2"/>
</dbReference>
<dbReference type="RefSeq" id="NP_001162755.1">
    <property type="nucleotide sequence ID" value="NM_001169284.2"/>
</dbReference>
<dbReference type="RefSeq" id="NP_001245668.1">
    <property type="nucleotide sequence ID" value="NM_001258739.2"/>
</dbReference>
<dbReference type="RefSeq" id="NP_001245669.1">
    <property type="nucleotide sequence ID" value="NM_001258740.2"/>
</dbReference>
<dbReference type="RefSeq" id="NP_511155.1">
    <property type="nucleotide sequence ID" value="NM_078600.4"/>
</dbReference>
<dbReference type="SMR" id="Q24568"/>
<dbReference type="BioGRID" id="58761">
    <property type="interactions" value="6"/>
</dbReference>
<dbReference type="FunCoup" id="Q24568">
    <property type="interactions" value="41"/>
</dbReference>
<dbReference type="IntAct" id="Q24568">
    <property type="interactions" value="889"/>
</dbReference>
<dbReference type="STRING" id="7227.FBpp0291228"/>
<dbReference type="GlyCosmos" id="Q24568">
    <property type="glycosylation" value="4 sites, No reported glycans"/>
</dbReference>
<dbReference type="GlyGen" id="Q24568">
    <property type="glycosylation" value="4 sites"/>
</dbReference>
<dbReference type="PaxDb" id="7227-FBpp0291228"/>
<dbReference type="EnsemblMetazoa" id="FBtr0073940">
    <property type="protein sequence ID" value="FBpp0073757"/>
    <property type="gene ID" value="FBgn0015774"/>
</dbReference>
<dbReference type="EnsemblMetazoa" id="FBtr0302016">
    <property type="protein sequence ID" value="FBpp0291226"/>
    <property type="gene ID" value="FBgn0015774"/>
</dbReference>
<dbReference type="EnsemblMetazoa" id="FBtr0302017">
    <property type="protein sequence ID" value="FBpp0291227"/>
    <property type="gene ID" value="FBgn0015774"/>
</dbReference>
<dbReference type="EnsemblMetazoa" id="FBtr0302018">
    <property type="protein sequence ID" value="FBpp0291228"/>
    <property type="gene ID" value="FBgn0015774"/>
</dbReference>
<dbReference type="EnsemblMetazoa" id="FBtr0304874">
    <property type="protein sequence ID" value="FBpp0293414"/>
    <property type="gene ID" value="FBgn0015774"/>
</dbReference>
<dbReference type="EnsemblMetazoa" id="FBtr0304875">
    <property type="protein sequence ID" value="FBpp0293415"/>
    <property type="gene ID" value="FBgn0015774"/>
</dbReference>
<dbReference type="GeneID" id="32400"/>
<dbReference type="KEGG" id="dme:Dmel_CG10521"/>
<dbReference type="AGR" id="FB:FBgn0015774"/>
<dbReference type="CTD" id="32400"/>
<dbReference type="FlyBase" id="FBgn0015774">
    <property type="gene designation" value="NetB"/>
</dbReference>
<dbReference type="VEuPathDB" id="VectorBase:FBgn0015774"/>
<dbReference type="eggNOG" id="KOG3512">
    <property type="taxonomic scope" value="Eukaryota"/>
</dbReference>
<dbReference type="GeneTree" id="ENSGT00940000153882"/>
<dbReference type="InParanoid" id="Q24568"/>
<dbReference type="OMA" id="DRKACRA"/>
<dbReference type="OrthoDB" id="5984158at2759"/>
<dbReference type="PhylomeDB" id="Q24568"/>
<dbReference type="SignaLink" id="Q24568"/>
<dbReference type="BioGRID-ORCS" id="32400">
    <property type="hits" value="0 hits in 3 CRISPR screens"/>
</dbReference>
<dbReference type="GenomeRNAi" id="32400"/>
<dbReference type="PRO" id="PR:Q24568"/>
<dbReference type="Proteomes" id="UP000000803">
    <property type="component" value="Chromosome X"/>
</dbReference>
<dbReference type="Bgee" id="FBgn0015774">
    <property type="expression patterns" value="Expressed in lamina monopolar neuron L3 (Drosophila) in insect head and 168 other cell types or tissues"/>
</dbReference>
<dbReference type="ExpressionAtlas" id="Q24568">
    <property type="expression patterns" value="baseline and differential"/>
</dbReference>
<dbReference type="GO" id="GO:0044295">
    <property type="term" value="C:axonal growth cone"/>
    <property type="evidence" value="ECO:0000315"/>
    <property type="project" value="UniProtKB"/>
</dbReference>
<dbReference type="GO" id="GO:0005604">
    <property type="term" value="C:basement membrane"/>
    <property type="evidence" value="ECO:0000318"/>
    <property type="project" value="GO_Central"/>
</dbReference>
<dbReference type="GO" id="GO:0031012">
    <property type="term" value="C:extracellular matrix"/>
    <property type="evidence" value="ECO:0000250"/>
    <property type="project" value="FlyBase"/>
</dbReference>
<dbReference type="GO" id="GO:0005576">
    <property type="term" value="C:extracellular region"/>
    <property type="evidence" value="ECO:0007669"/>
    <property type="project" value="UniProtKB-KW"/>
</dbReference>
<dbReference type="GO" id="GO:0043025">
    <property type="term" value="C:neuronal cell body"/>
    <property type="evidence" value="ECO:0000314"/>
    <property type="project" value="UniProtKB"/>
</dbReference>
<dbReference type="GO" id="GO:0048471">
    <property type="term" value="C:perinuclear region of cytoplasm"/>
    <property type="evidence" value="ECO:0000314"/>
    <property type="project" value="UniProtKB"/>
</dbReference>
<dbReference type="GO" id="GO:0009887">
    <property type="term" value="P:animal organ morphogenesis"/>
    <property type="evidence" value="ECO:0000318"/>
    <property type="project" value="GO_Central"/>
</dbReference>
<dbReference type="GO" id="GO:0007411">
    <property type="term" value="P:axon guidance"/>
    <property type="evidence" value="ECO:0000316"/>
    <property type="project" value="FlyBase"/>
</dbReference>
<dbReference type="GO" id="GO:0048749">
    <property type="term" value="P:compound eye development"/>
    <property type="evidence" value="ECO:0000315"/>
    <property type="project" value="UniProtKB"/>
</dbReference>
<dbReference type="GO" id="GO:0016358">
    <property type="term" value="P:dendrite development"/>
    <property type="evidence" value="ECO:0000318"/>
    <property type="project" value="GO_Central"/>
</dbReference>
<dbReference type="GO" id="GO:0070983">
    <property type="term" value="P:dendrite guidance"/>
    <property type="evidence" value="ECO:0000316"/>
    <property type="project" value="FlyBase"/>
</dbReference>
<dbReference type="GO" id="GO:0008347">
    <property type="term" value="P:glial cell migration"/>
    <property type="evidence" value="ECO:0000315"/>
    <property type="project" value="FlyBase"/>
</dbReference>
<dbReference type="GO" id="GO:0008045">
    <property type="term" value="P:motor neuron axon guidance"/>
    <property type="evidence" value="ECO:0000315"/>
    <property type="project" value="FlyBase"/>
</dbReference>
<dbReference type="GO" id="GO:2000289">
    <property type="term" value="P:regulation of photoreceptor cell axon guidance"/>
    <property type="evidence" value="ECO:0000315"/>
    <property type="project" value="FlyBase"/>
</dbReference>
<dbReference type="GO" id="GO:0007432">
    <property type="term" value="P:salivary gland boundary specification"/>
    <property type="evidence" value="ECO:0000315"/>
    <property type="project" value="FlyBase"/>
</dbReference>
<dbReference type="GO" id="GO:0016200">
    <property type="term" value="P:synaptic target attraction"/>
    <property type="evidence" value="ECO:0000304"/>
    <property type="project" value="FlyBase"/>
</dbReference>
<dbReference type="GO" id="GO:0008039">
    <property type="term" value="P:synaptic target recognition"/>
    <property type="evidence" value="ECO:0000315"/>
    <property type="project" value="FlyBase"/>
</dbReference>
<dbReference type="GO" id="GO:0009888">
    <property type="term" value="P:tissue development"/>
    <property type="evidence" value="ECO:0000318"/>
    <property type="project" value="GO_Central"/>
</dbReference>
<dbReference type="CDD" id="cd00055">
    <property type="entry name" value="EGF_Lam"/>
    <property type="match status" value="3"/>
</dbReference>
<dbReference type="CDD" id="cd03579">
    <property type="entry name" value="NTR_netrin-1_like"/>
    <property type="match status" value="1"/>
</dbReference>
<dbReference type="FunFam" id="2.10.25.10:FF:000081">
    <property type="entry name" value="Netrin 1"/>
    <property type="match status" value="1"/>
</dbReference>
<dbReference type="FunFam" id="2.10.25.10:FF:000048">
    <property type="entry name" value="Netrin 3"/>
    <property type="match status" value="1"/>
</dbReference>
<dbReference type="FunFam" id="2.60.120.260:FF:000080">
    <property type="entry name" value="Netrin 3"/>
    <property type="match status" value="1"/>
</dbReference>
<dbReference type="FunFam" id="2.40.50.120:FF:000022">
    <property type="entry name" value="Netrin-B"/>
    <property type="match status" value="1"/>
</dbReference>
<dbReference type="FunFam" id="2.170.300.10:FF:000037">
    <property type="entry name" value="Netrin-B, isoform G"/>
    <property type="match status" value="1"/>
</dbReference>
<dbReference type="FunFam" id="2.60.120.260:FF:000206">
    <property type="entry name" value="Netrin-B, isoform G"/>
    <property type="match status" value="1"/>
</dbReference>
<dbReference type="Gene3D" id="2.40.50.120">
    <property type="match status" value="1"/>
</dbReference>
<dbReference type="Gene3D" id="2.60.120.260">
    <property type="entry name" value="Galactose-binding domain-like"/>
    <property type="match status" value="2"/>
</dbReference>
<dbReference type="Gene3D" id="2.10.25.10">
    <property type="entry name" value="Laminin"/>
    <property type="match status" value="1"/>
</dbReference>
<dbReference type="Gene3D" id="2.170.300.10">
    <property type="entry name" value="Tie2 ligand-binding domain superfamily"/>
    <property type="match status" value="1"/>
</dbReference>
<dbReference type="InterPro" id="IPR050440">
    <property type="entry name" value="Laminin/Netrin_ECM"/>
</dbReference>
<dbReference type="InterPro" id="IPR008211">
    <property type="entry name" value="Laminin_N"/>
</dbReference>
<dbReference type="InterPro" id="IPR002049">
    <property type="entry name" value="LE_dom"/>
</dbReference>
<dbReference type="InterPro" id="IPR056863">
    <property type="entry name" value="LMN_ATRN_NET-like_EGF"/>
</dbReference>
<dbReference type="InterPro" id="IPR001134">
    <property type="entry name" value="Netrin_domain"/>
</dbReference>
<dbReference type="InterPro" id="IPR018933">
    <property type="entry name" value="Netrin_module_non-TIMP"/>
</dbReference>
<dbReference type="InterPro" id="IPR008993">
    <property type="entry name" value="TIMP-like_OB-fold"/>
</dbReference>
<dbReference type="PANTHER" id="PTHR10574:SF365">
    <property type="entry name" value="NETRIN-A-RELATED"/>
    <property type="match status" value="1"/>
</dbReference>
<dbReference type="PANTHER" id="PTHR10574">
    <property type="entry name" value="NETRIN/LAMININ-RELATED"/>
    <property type="match status" value="1"/>
</dbReference>
<dbReference type="Pfam" id="PF00053">
    <property type="entry name" value="EGF_laminin"/>
    <property type="match status" value="2"/>
</dbReference>
<dbReference type="Pfam" id="PF24973">
    <property type="entry name" value="EGF_LMN_ATRN"/>
    <property type="match status" value="1"/>
</dbReference>
<dbReference type="Pfam" id="PF00055">
    <property type="entry name" value="Laminin_N"/>
    <property type="match status" value="1"/>
</dbReference>
<dbReference type="Pfam" id="PF01759">
    <property type="entry name" value="NTR"/>
    <property type="match status" value="1"/>
</dbReference>
<dbReference type="SMART" id="SM00643">
    <property type="entry name" value="C345C"/>
    <property type="match status" value="1"/>
</dbReference>
<dbReference type="SMART" id="SM00180">
    <property type="entry name" value="EGF_Lam"/>
    <property type="match status" value="3"/>
</dbReference>
<dbReference type="SMART" id="SM00136">
    <property type="entry name" value="LamNT"/>
    <property type="match status" value="1"/>
</dbReference>
<dbReference type="SUPFAM" id="SSF57196">
    <property type="entry name" value="EGF/Laminin"/>
    <property type="match status" value="3"/>
</dbReference>
<dbReference type="SUPFAM" id="SSF50242">
    <property type="entry name" value="TIMP-like"/>
    <property type="match status" value="1"/>
</dbReference>
<dbReference type="PROSITE" id="PS00022">
    <property type="entry name" value="EGF_1"/>
    <property type="match status" value="2"/>
</dbReference>
<dbReference type="PROSITE" id="PS01248">
    <property type="entry name" value="EGF_LAM_1"/>
    <property type="match status" value="3"/>
</dbReference>
<dbReference type="PROSITE" id="PS50027">
    <property type="entry name" value="EGF_LAM_2"/>
    <property type="match status" value="3"/>
</dbReference>
<dbReference type="PROSITE" id="PS51117">
    <property type="entry name" value="LAMININ_NTER"/>
    <property type="match status" value="1"/>
</dbReference>
<dbReference type="PROSITE" id="PS50189">
    <property type="entry name" value="NTR"/>
    <property type="match status" value="1"/>
</dbReference>
<gene>
    <name type="primary">NetB</name>
    <name type="ORF">CG10521</name>
</gene>
<sequence>MVRATGTRMGLLLPIILALAIGSSAAGISSNDPCYFEGKPRKCLPSFVNAAYGNPVQASSVCGAQQPERYCELLRDGNAGECRSCEQQRYGPAALTDLNNPSNVTCWRSGAVNVPHDPDSAPPDNVTLTLSLGKKYELTYISLSFCPRSPRPDSLAIFKSSDFGQTWQPFQFYSSQCQKFYGRPDRAKISKFNEQEARCINSQHDTGGAAQRFAFNTLEGRPSANDLDSSLVLQDWVTATDIRVVFHRLELPPQLLKVKNANAFSDEMGGSREEDEDDDADLELDGEQDEYDYNLQDNDSADAGYDEYEEPKKHLELDDDHLHLDYASDGESVVKRQGKHKGSAYEKHYQSKLAATTPPQQPPKVTPPGKVTPPSTAAPSAAASAVTLPISQHYAVSDFAVGGRCKCNGHASECVATVSSGSGTALSDQDDGQDEDTPSAPSLANHFGRSTQMSAKLTMTCACKHNTAGPECERCKPFYFDRPWGRATDNDANECKMCQCNGHARRCRFNLELYKLSGRVSGGVCYNCQHDTTGRYCHYCREGYYRDATKPPNHRKVCKRCDCHPVGSTGKTCNHLSGQCPCKEGVTGLTCNRCARGYQQTRSHVAPCIKVPTNANMIQAESAGGGGGGGTGDYKDGGGSQVEEMKKYCGKCKASPKKLNLNKFCMEDYAILAKVIGHDRASQDISTEKFSIERQNEIYKYEINIQTIFKRNPMSGTTSSLLGRGNMMLLVPRKSIECQCPKIKLNKSYLILGRDSEAAPGYLAIGPSSVVLEWKDEWSLRMKRFQRRARKCS</sequence>
<accession>Q24568</accession>
<accession>Q9VY23</accession>
<name>NETB_DROME</name>